<gene>
    <name type="ordered locus">ACR194C</name>
</gene>
<organism>
    <name type="scientific">Eremothecium gossypii (strain ATCC 10895 / CBS 109.51 / FGSC 9923 / NRRL Y-1056)</name>
    <name type="common">Yeast</name>
    <name type="synonym">Ashbya gossypii</name>
    <dbReference type="NCBI Taxonomy" id="284811"/>
    <lineage>
        <taxon>Eukaryota</taxon>
        <taxon>Fungi</taxon>
        <taxon>Dikarya</taxon>
        <taxon>Ascomycota</taxon>
        <taxon>Saccharomycotina</taxon>
        <taxon>Saccharomycetes</taxon>
        <taxon>Saccharomycetales</taxon>
        <taxon>Saccharomycetaceae</taxon>
        <taxon>Eremothecium</taxon>
    </lineage>
</organism>
<accession>Q75BS7</accession>
<name>CMR1_EREGS</name>
<feature type="chain" id="PRO_0000351096" description="DNA damage-binding protein CMR1">
    <location>
        <begin position="1"/>
        <end position="513"/>
    </location>
</feature>
<feature type="repeat" description="WD 1" evidence="2">
    <location>
        <begin position="183"/>
        <end position="224"/>
    </location>
</feature>
<feature type="repeat" description="WD 2" evidence="2">
    <location>
        <begin position="237"/>
        <end position="277"/>
    </location>
</feature>
<feature type="repeat" description="WD 3" evidence="2">
    <location>
        <begin position="329"/>
        <end position="369"/>
    </location>
</feature>
<feature type="repeat" description="WD 4" evidence="2">
    <location>
        <begin position="386"/>
        <end position="425"/>
    </location>
</feature>
<feature type="repeat" description="WD 5" evidence="2">
    <location>
        <begin position="438"/>
        <end position="477"/>
    </location>
</feature>
<feature type="repeat" description="WD 6" evidence="2">
    <location>
        <begin position="478"/>
        <end position="513"/>
    </location>
</feature>
<feature type="region of interest" description="Disordered" evidence="3">
    <location>
        <begin position="35"/>
        <end position="103"/>
    </location>
</feature>
<feature type="compositionally biased region" description="Basic and acidic residues" evidence="3">
    <location>
        <begin position="35"/>
        <end position="45"/>
    </location>
</feature>
<reference key="1">
    <citation type="journal article" date="2004" name="Science">
        <title>The Ashbya gossypii genome as a tool for mapping the ancient Saccharomyces cerevisiae genome.</title>
        <authorList>
            <person name="Dietrich F.S."/>
            <person name="Voegeli S."/>
            <person name="Brachat S."/>
            <person name="Lerch A."/>
            <person name="Gates K."/>
            <person name="Steiner S."/>
            <person name="Mohr C."/>
            <person name="Poehlmann R."/>
            <person name="Luedi P."/>
            <person name="Choi S."/>
            <person name="Wing R.A."/>
            <person name="Flavier A."/>
            <person name="Gaffney T.D."/>
            <person name="Philippsen P."/>
        </authorList>
    </citation>
    <scope>NUCLEOTIDE SEQUENCE [LARGE SCALE GENOMIC DNA]</scope>
    <source>
        <strain>ATCC 10895 / CBS 109.51 / FGSC 9923 / NRRL Y-1056</strain>
    </source>
</reference>
<reference key="2">
    <citation type="journal article" date="2013" name="G3 (Bethesda)">
        <title>Genomes of Ashbya fungi isolated from insects reveal four mating-type loci, numerous translocations, lack of transposons, and distinct gene duplications.</title>
        <authorList>
            <person name="Dietrich F.S."/>
            <person name="Voegeli S."/>
            <person name="Kuo S."/>
            <person name="Philippsen P."/>
        </authorList>
    </citation>
    <scope>GENOME REANNOTATION</scope>
    <source>
        <strain>ATCC 10895 / CBS 109.51 / FGSC 9923 / NRRL Y-1056</strain>
    </source>
</reference>
<evidence type="ECO:0000250" key="1">
    <source>
        <dbReference type="UniProtKB" id="Q12510"/>
    </source>
</evidence>
<evidence type="ECO:0000255" key="2"/>
<evidence type="ECO:0000256" key="3">
    <source>
        <dbReference type="SAM" id="MobiDB-lite"/>
    </source>
</evidence>
<evidence type="ECO:0000305" key="4"/>
<protein>
    <recommendedName>
        <fullName evidence="1">DNA damage-binding protein CMR1</fullName>
    </recommendedName>
</protein>
<sequence length="513" mass="57793">MTANSEFNKRRLENIKRNNELLKKLNLAGIPARIRSEAGIEDHRKASGGAVKKKQGKAPVKREAKPAPIPTRRSRRLRGEAADVEGEAGAGSDTAQNVKQEEEWKELKEARVVGDIKLSDLIKSEDDGELLEKFRRYADKSFSGGDFFEELQRHQKPNPEVQRLREEMRLQQYDVFDPKELAIVHERVTALCFHPSQEKKLIVGGDTAGTVGLWNVADENPDPEHPDSVPDITRFKLFSRNVSKIEVFPTDSSKILAASYDGALRSIDMQSLKSDELLHFQNEHGDTLGISDCQFSYDSPNVVMLTTLGGEFAQRDLRTKPDTMNIMRLSDKKIGCMAIDPSRPYSVATASLDRTLRIWDLRKTVAKPDWSQYEDYASHEVVSTYNSRLSVSAVSYAPIDHTLVCNGYDNTVRLFNARADLPSELQPDFTIQHNCKSGRWVSVLKARFKLNMDVFAIANMKRAIDIYTSRGEQLSHLETSTVPAVVSWHPMQNWIVGGNNSGKVFLFTDAPQE</sequence>
<keyword id="KW-0227">DNA damage</keyword>
<keyword id="KW-0238">DNA-binding</keyword>
<keyword id="KW-1185">Reference proteome</keyword>
<keyword id="KW-0677">Repeat</keyword>
<keyword id="KW-0853">WD repeat</keyword>
<comment type="function">
    <text evidence="1">DNA-binding protein that binds to both single- and double-stranded DNA. Binds preferentially to UV-damaged DNA. May be involved in DNA-metabolic processes.</text>
</comment>
<comment type="similarity">
    <text evidence="4">Belongs to the WD repeat DDB2/WDR76 family.</text>
</comment>
<proteinExistence type="inferred from homology"/>
<dbReference type="EMBL" id="AE016816">
    <property type="protein sequence ID" value="AAS51420.1"/>
    <property type="molecule type" value="Genomic_DNA"/>
</dbReference>
<dbReference type="RefSeq" id="NP_983596.1">
    <property type="nucleotide sequence ID" value="NM_208949.1"/>
</dbReference>
<dbReference type="SMR" id="Q75BS7"/>
<dbReference type="FunCoup" id="Q75BS7">
    <property type="interactions" value="823"/>
</dbReference>
<dbReference type="STRING" id="284811.Q75BS7"/>
<dbReference type="EnsemblFungi" id="AAS51420">
    <property type="protein sequence ID" value="AAS51420"/>
    <property type="gene ID" value="AGOS_ACR194C"/>
</dbReference>
<dbReference type="GeneID" id="4619728"/>
<dbReference type="KEGG" id="ago:AGOS_ACR194C"/>
<dbReference type="eggNOG" id="KOG4328">
    <property type="taxonomic scope" value="Eukaryota"/>
</dbReference>
<dbReference type="HOGENOM" id="CLU_017019_1_1_1"/>
<dbReference type="InParanoid" id="Q75BS7"/>
<dbReference type="OMA" id="DPNTLYW"/>
<dbReference type="OrthoDB" id="9890280at2759"/>
<dbReference type="Proteomes" id="UP000000591">
    <property type="component" value="Chromosome III"/>
</dbReference>
<dbReference type="GO" id="GO:0000785">
    <property type="term" value="C:chromatin"/>
    <property type="evidence" value="ECO:0007669"/>
    <property type="project" value="EnsemblFungi"/>
</dbReference>
<dbReference type="GO" id="GO:0005737">
    <property type="term" value="C:cytoplasm"/>
    <property type="evidence" value="ECO:0007669"/>
    <property type="project" value="EnsemblFungi"/>
</dbReference>
<dbReference type="GO" id="GO:0034399">
    <property type="term" value="C:nuclear periphery"/>
    <property type="evidence" value="ECO:0007669"/>
    <property type="project" value="EnsemblFungi"/>
</dbReference>
<dbReference type="GO" id="GO:0005634">
    <property type="term" value="C:nucleus"/>
    <property type="evidence" value="ECO:0000318"/>
    <property type="project" value="GO_Central"/>
</dbReference>
<dbReference type="GO" id="GO:0003677">
    <property type="term" value="F:DNA binding"/>
    <property type="evidence" value="ECO:0000318"/>
    <property type="project" value="GO_Central"/>
</dbReference>
<dbReference type="GO" id="GO:0006974">
    <property type="term" value="P:DNA damage response"/>
    <property type="evidence" value="ECO:0007669"/>
    <property type="project" value="UniProtKB-KW"/>
</dbReference>
<dbReference type="GO" id="GO:2000001">
    <property type="term" value="P:regulation of DNA damage checkpoint"/>
    <property type="evidence" value="ECO:0000318"/>
    <property type="project" value="GO_Central"/>
</dbReference>
<dbReference type="Gene3D" id="2.130.10.10">
    <property type="entry name" value="YVTN repeat-like/Quinoprotein amine dehydrogenase"/>
    <property type="match status" value="1"/>
</dbReference>
<dbReference type="InterPro" id="IPR015943">
    <property type="entry name" value="WD40/YVTN_repeat-like_dom_sf"/>
</dbReference>
<dbReference type="InterPro" id="IPR019775">
    <property type="entry name" value="WD40_repeat_CS"/>
</dbReference>
<dbReference type="InterPro" id="IPR036322">
    <property type="entry name" value="WD40_repeat_dom_sf"/>
</dbReference>
<dbReference type="InterPro" id="IPR001680">
    <property type="entry name" value="WD40_rpt"/>
</dbReference>
<dbReference type="InterPro" id="IPR050853">
    <property type="entry name" value="WD_repeat_DNA-damage-binding"/>
</dbReference>
<dbReference type="PANTHER" id="PTHR14773">
    <property type="entry name" value="WD REPEAT-CONTAINING PROTEIN 76"/>
    <property type="match status" value="1"/>
</dbReference>
<dbReference type="PANTHER" id="PTHR14773:SF0">
    <property type="entry name" value="WD REPEAT-CONTAINING PROTEIN 76"/>
    <property type="match status" value="1"/>
</dbReference>
<dbReference type="Pfam" id="PF00400">
    <property type="entry name" value="WD40"/>
    <property type="match status" value="1"/>
</dbReference>
<dbReference type="SMART" id="SM00320">
    <property type="entry name" value="WD40"/>
    <property type="match status" value="5"/>
</dbReference>
<dbReference type="SUPFAM" id="SSF50978">
    <property type="entry name" value="WD40 repeat-like"/>
    <property type="match status" value="1"/>
</dbReference>
<dbReference type="PROSITE" id="PS00678">
    <property type="entry name" value="WD_REPEATS_1"/>
    <property type="match status" value="1"/>
</dbReference>
<dbReference type="PROSITE" id="PS50082">
    <property type="entry name" value="WD_REPEATS_2"/>
    <property type="match status" value="1"/>
</dbReference>
<dbReference type="PROSITE" id="PS50294">
    <property type="entry name" value="WD_REPEATS_REGION"/>
    <property type="match status" value="1"/>
</dbReference>